<feature type="signal peptide" evidence="1">
    <location>
        <begin position="1"/>
        <end position="16"/>
    </location>
</feature>
<feature type="chain" id="PRO_0000014816" description="Leukocyte immunoglobulin-like receptor subfamily A member 1">
    <location>
        <begin position="17"/>
        <end position="489"/>
    </location>
</feature>
<feature type="topological domain" description="Extracellular" evidence="1">
    <location>
        <begin position="17"/>
        <end position="461"/>
    </location>
</feature>
<feature type="transmembrane region" description="Helical" evidence="1">
    <location>
        <begin position="462"/>
        <end position="482"/>
    </location>
</feature>
<feature type="topological domain" description="Cytoplasmic" evidence="1">
    <location>
        <begin position="483"/>
        <end position="489"/>
    </location>
</feature>
<feature type="domain" description="Ig-like C2-type 1">
    <location>
        <begin position="27"/>
        <end position="116"/>
    </location>
</feature>
<feature type="domain" description="Ig-like C2-type 2">
    <location>
        <begin position="119"/>
        <end position="224"/>
    </location>
</feature>
<feature type="domain" description="Ig-like C2-type 3">
    <location>
        <begin position="226"/>
        <end position="315"/>
    </location>
</feature>
<feature type="domain" description="Ig-like C2-type 4">
    <location>
        <begin position="326"/>
        <end position="415"/>
    </location>
</feature>
<feature type="region of interest" description="Disordered" evidence="3">
    <location>
        <begin position="425"/>
        <end position="453"/>
    </location>
</feature>
<feature type="compositionally biased region" description="Polar residues" evidence="3">
    <location>
        <begin position="441"/>
        <end position="453"/>
    </location>
</feature>
<feature type="glycosylation site" description="N-linked (GlcNAc...) asparagine" evidence="1">
    <location>
        <position position="140"/>
    </location>
</feature>
<feature type="glycosylation site" description="N-linked (GlcNAc...) asparagine" evidence="1">
    <location>
        <position position="281"/>
    </location>
</feature>
<feature type="glycosylation site" description="N-linked (GlcNAc...) asparagine" evidence="1">
    <location>
        <position position="302"/>
    </location>
</feature>
<feature type="glycosylation site" description="N-linked (GlcNAc...) asparagine" evidence="1">
    <location>
        <position position="341"/>
    </location>
</feature>
<feature type="glycosylation site" description="N-linked (GlcNAc...) asparagine" evidence="1">
    <location>
        <position position="431"/>
    </location>
</feature>
<feature type="glycosylation site" description="N-linked (GlcNAc...) asparagine" evidence="1">
    <location>
        <position position="448"/>
    </location>
</feature>
<feature type="disulfide bond" evidence="2">
    <location>
        <begin position="49"/>
        <end position="98"/>
    </location>
</feature>
<feature type="disulfide bond" evidence="2">
    <location>
        <begin position="145"/>
        <end position="197"/>
    </location>
</feature>
<feature type="disulfide bond" evidence="2">
    <location>
        <begin position="157"/>
        <end position="167"/>
    </location>
</feature>
<feature type="disulfide bond" evidence="2">
    <location>
        <begin position="246"/>
        <end position="297"/>
    </location>
</feature>
<feature type="disulfide bond" evidence="2">
    <location>
        <begin position="346"/>
        <end position="397"/>
    </location>
</feature>
<feature type="splice variant" id="VSP_008454" description="In isoform 2." evidence="5">
    <location>
        <begin position="221"/>
        <end position="420"/>
    </location>
</feature>
<feature type="sequence variant" id="VAR_059396" description="In dbSNP:rs1974982." evidence="4">
    <original>R</original>
    <variation>G</variation>
    <location>
        <position position="12"/>
    </location>
</feature>
<feature type="sequence variant" id="VAR_049886" description="In dbSNP:rs10417589.">
    <original>S</original>
    <variation>G</variation>
    <location>
        <position position="153"/>
    </location>
</feature>
<feature type="sequence variant" id="VAR_049887" description="In dbSNP:rs373854." evidence="4">
    <original>L</original>
    <variation>P</variation>
    <location>
        <position position="220"/>
    </location>
</feature>
<feature type="sequence conflict" description="In Ref. 1; AAB87663." evidence="6" ref="1">
    <original>V</original>
    <variation>L</variation>
    <location>
        <position position="5"/>
    </location>
</feature>
<name>LIRA1_HUMAN</name>
<sequence>MTPIVTVLICLRLSLGPRTHVQAGTLPKPTLWAEPGSVITQGSPVTLWCQGILETQEYRLYREKKTAPWITRIPQEIVKKGQFPIPSITWEHTGRYRCFYGSHTAGWSEPSDPLELVVTGAYIKPTLSALPSPVVTSGGNVTLHCVSQVAFGSFILCKEGEDEHPQCLNSQPRTHGWSRAIFSVGPVSPSRRWSYRCYAYDSNSPHVWSLPSDLLELLVLGVSKKPSLSVQPGPIVAPGESLTLQCVSDVSYDRFVLYKEGERDFLQLPGPQPQAGLSQANFTLGPVSRSYGGQYRCSGAYNLSSEWSAPSDPLDILIAGQFRGRPFISVHPGPTVASGENVTLLCQSWGPFHTFLLTKAGAADAPLRLRSIHEYPKYQAEFPMSPVTSAHSGTYRCYGSLSSNPYLLSHPSDSLELMVSGAAETLSPPQNKSDSKAGAANTLSPSQNKTASHPQDYTVENLIRMGIAGLVLVVLGILLFEAQHSQRSL</sequence>
<gene>
    <name type="primary">LILRA1</name>
    <name type="synonym">LIR6</name>
</gene>
<organism>
    <name type="scientific">Homo sapiens</name>
    <name type="common">Human</name>
    <dbReference type="NCBI Taxonomy" id="9606"/>
    <lineage>
        <taxon>Eukaryota</taxon>
        <taxon>Metazoa</taxon>
        <taxon>Chordata</taxon>
        <taxon>Craniata</taxon>
        <taxon>Vertebrata</taxon>
        <taxon>Euteleostomi</taxon>
        <taxon>Mammalia</taxon>
        <taxon>Eutheria</taxon>
        <taxon>Euarchontoglires</taxon>
        <taxon>Primates</taxon>
        <taxon>Haplorrhini</taxon>
        <taxon>Catarrhini</taxon>
        <taxon>Hominidae</taxon>
        <taxon>Homo</taxon>
    </lineage>
</organism>
<proteinExistence type="evidence at protein level"/>
<keyword id="KW-1064">Adaptive immunity</keyword>
<keyword id="KW-0025">Alternative splicing</keyword>
<keyword id="KW-1015">Disulfide bond</keyword>
<keyword id="KW-0325">Glycoprotein</keyword>
<keyword id="KW-0391">Immunity</keyword>
<keyword id="KW-0393">Immunoglobulin domain</keyword>
<keyword id="KW-0472">Membrane</keyword>
<keyword id="KW-1267">Proteomics identification</keyword>
<keyword id="KW-0675">Receptor</keyword>
<keyword id="KW-1185">Reference proteome</keyword>
<keyword id="KW-0677">Repeat</keyword>
<keyword id="KW-0732">Signal</keyword>
<keyword id="KW-0812">Transmembrane</keyword>
<keyword id="KW-1133">Transmembrane helix</keyword>
<comment type="function">
    <text>May act as receptor for class I MHC antigens.</text>
</comment>
<comment type="subcellular location">
    <subcellularLocation>
        <location>Membrane</location>
        <topology>Single-pass type I membrane protein</topology>
    </subcellularLocation>
</comment>
<comment type="alternative products">
    <event type="alternative splicing"/>
    <isoform>
        <id>O75019-1</id>
        <name>1</name>
        <name>LIR-6a</name>
        <sequence type="displayed"/>
    </isoform>
    <isoform>
        <id>O75019-2</id>
        <name>2</name>
        <name>LIR-6b</name>
        <sequence type="described" ref="VSP_008454"/>
    </isoform>
</comment>
<comment type="tissue specificity">
    <text evidence="4">Detected in monocytes and B-cells.</text>
</comment>
<evidence type="ECO:0000255" key="1"/>
<evidence type="ECO:0000255" key="2">
    <source>
        <dbReference type="PROSITE-ProRule" id="PRU00114"/>
    </source>
</evidence>
<evidence type="ECO:0000256" key="3">
    <source>
        <dbReference type="SAM" id="MobiDB-lite"/>
    </source>
</evidence>
<evidence type="ECO:0000269" key="4">
    <source>
    </source>
</evidence>
<evidence type="ECO:0000303" key="5">
    <source>
    </source>
</evidence>
<evidence type="ECO:0000305" key="6"/>
<protein>
    <recommendedName>
        <fullName>Leukocyte immunoglobulin-like receptor subfamily A member 1</fullName>
    </recommendedName>
    <alternativeName>
        <fullName>CD85 antigen-like family member I</fullName>
    </alternativeName>
    <alternativeName>
        <fullName>Leukocyte immunoglobulin-like receptor 6</fullName>
        <shortName>LIR-6</shortName>
    </alternativeName>
    <cdAntigenName>CD85i</cdAntigenName>
</protein>
<accession>O75019</accession>
<accession>O75018</accession>
<accession>Q3MJA6</accession>
<dbReference type="EMBL" id="AF025529">
    <property type="protein sequence ID" value="AAB87663.1"/>
    <property type="molecule type" value="mRNA"/>
</dbReference>
<dbReference type="EMBL" id="AF025530">
    <property type="protein sequence ID" value="AAB87664.1"/>
    <property type="molecule type" value="mRNA"/>
</dbReference>
<dbReference type="EMBL" id="BC101514">
    <property type="protein sequence ID" value="AAI01515.1"/>
    <property type="molecule type" value="mRNA"/>
</dbReference>
<dbReference type="CCDS" id="CCDS12901.1">
    <molecule id="O75019-1"/>
</dbReference>
<dbReference type="CCDS" id="CCDS62802.1">
    <molecule id="O75019-2"/>
</dbReference>
<dbReference type="RefSeq" id="NP_001265247.1">
    <molecule id="O75019-2"/>
    <property type="nucleotide sequence ID" value="NM_001278318.2"/>
</dbReference>
<dbReference type="RefSeq" id="NP_001265248.1">
    <property type="nucleotide sequence ID" value="NM_001278319.1"/>
</dbReference>
<dbReference type="RefSeq" id="NP_006854.1">
    <molecule id="O75019-1"/>
    <property type="nucleotide sequence ID" value="NM_006863.4"/>
</dbReference>
<dbReference type="SMR" id="O75019"/>
<dbReference type="BioGRID" id="116214">
    <property type="interactions" value="1"/>
</dbReference>
<dbReference type="FunCoup" id="O75019">
    <property type="interactions" value="527"/>
</dbReference>
<dbReference type="IntAct" id="O75019">
    <property type="interactions" value="1"/>
</dbReference>
<dbReference type="STRING" id="9606.ENSP00000251372"/>
<dbReference type="GlyCosmos" id="O75019">
    <property type="glycosylation" value="6 sites, No reported glycans"/>
</dbReference>
<dbReference type="GlyGen" id="O75019">
    <property type="glycosylation" value="7 sites"/>
</dbReference>
<dbReference type="iPTMnet" id="O75019"/>
<dbReference type="PhosphoSitePlus" id="O75019"/>
<dbReference type="BioMuta" id="LILRA1"/>
<dbReference type="MassIVE" id="O75019"/>
<dbReference type="PaxDb" id="9606-ENSP00000251372"/>
<dbReference type="PeptideAtlas" id="O75019"/>
<dbReference type="ProteomicsDB" id="49694">
    <molecule id="O75019-1"/>
</dbReference>
<dbReference type="ProteomicsDB" id="49695">
    <molecule id="O75019-2"/>
</dbReference>
<dbReference type="Antibodypedia" id="46369">
    <property type="antibodies" value="193 antibodies from 24 providers"/>
</dbReference>
<dbReference type="DNASU" id="11024"/>
<dbReference type="Ensembl" id="ENST00000251372.8">
    <molecule id="O75019-1"/>
    <property type="protein sequence ID" value="ENSP00000251372.3"/>
    <property type="gene ID" value="ENSG00000104974.12"/>
</dbReference>
<dbReference type="Ensembl" id="ENST00000453777.1">
    <molecule id="O75019-2"/>
    <property type="protein sequence ID" value="ENSP00000413715.1"/>
    <property type="gene ID" value="ENSG00000104974.12"/>
</dbReference>
<dbReference type="Ensembl" id="ENST00000617170.4">
    <molecule id="O75019-1"/>
    <property type="protein sequence ID" value="ENSP00000477637.1"/>
    <property type="gene ID" value="ENSG00000275525.5"/>
</dbReference>
<dbReference type="Ensembl" id="ENST00000620606.4">
    <molecule id="O75019-2"/>
    <property type="protein sequence ID" value="ENSP00000478666.1"/>
    <property type="gene ID" value="ENSG00000275525.5"/>
</dbReference>
<dbReference type="Ensembl" id="ENST00000628480.1">
    <molecule id="O75019-2"/>
    <property type="protein sequence ID" value="ENSP00000487229.1"/>
    <property type="gene ID" value="ENSG00000277398.5"/>
</dbReference>
<dbReference type="Ensembl" id="ENST00000631007.1">
    <molecule id="O75019-2"/>
    <property type="protein sequence ID" value="ENSP00000487011.1"/>
    <property type="gene ID" value="ENSG00000274935.5"/>
</dbReference>
<dbReference type="GeneID" id="11024"/>
<dbReference type="KEGG" id="hsa:11024"/>
<dbReference type="MANE-Select" id="ENST00000251372.8">
    <property type="protein sequence ID" value="ENSP00000251372.3"/>
    <property type="RefSeq nucleotide sequence ID" value="NM_006863.4"/>
    <property type="RefSeq protein sequence ID" value="NP_006854.1"/>
</dbReference>
<dbReference type="UCSC" id="uc002qgh.4">
    <molecule id="O75019-1"/>
    <property type="organism name" value="human"/>
</dbReference>
<dbReference type="AGR" id="HGNC:6602"/>
<dbReference type="CTD" id="11024"/>
<dbReference type="DisGeNET" id="11024"/>
<dbReference type="GeneCards" id="LILRA1"/>
<dbReference type="HGNC" id="HGNC:6602">
    <property type="gene designation" value="LILRA1"/>
</dbReference>
<dbReference type="HPA" id="ENSG00000104974">
    <property type="expression patterns" value="Tissue enriched (lymphoid)"/>
</dbReference>
<dbReference type="MIM" id="604810">
    <property type="type" value="gene"/>
</dbReference>
<dbReference type="neXtProt" id="NX_O75019"/>
<dbReference type="OpenTargets" id="ENSG00000104974"/>
<dbReference type="PharmGKB" id="PA30376"/>
<dbReference type="VEuPathDB" id="HostDB:ENSG00000104974"/>
<dbReference type="eggNOG" id="ENOG502RYEX">
    <property type="taxonomic scope" value="Eukaryota"/>
</dbReference>
<dbReference type="GeneTree" id="ENSGT01100000263478"/>
<dbReference type="HOGENOM" id="CLU_021100_1_4_1"/>
<dbReference type="InParanoid" id="O75019"/>
<dbReference type="OMA" id="GETERCC"/>
<dbReference type="OrthoDB" id="9427497at2759"/>
<dbReference type="PAN-GO" id="O75019">
    <property type="GO annotations" value="3 GO annotations based on evolutionary models"/>
</dbReference>
<dbReference type="PhylomeDB" id="O75019"/>
<dbReference type="TreeFam" id="TF336644"/>
<dbReference type="PathwayCommons" id="O75019"/>
<dbReference type="Reactome" id="R-HSA-198933">
    <property type="pathway name" value="Immunoregulatory interactions between a Lymphoid and a non-Lymphoid cell"/>
</dbReference>
<dbReference type="SignaLink" id="O75019"/>
<dbReference type="BioGRID-ORCS" id="11024">
    <property type="hits" value="17 hits in 1107 CRISPR screens"/>
</dbReference>
<dbReference type="ChiTaRS" id="LILRA1">
    <property type="organism name" value="human"/>
</dbReference>
<dbReference type="GenomeRNAi" id="11024"/>
<dbReference type="Pharos" id="O75019">
    <property type="development level" value="Tbio"/>
</dbReference>
<dbReference type="PRO" id="PR:O75019"/>
<dbReference type="Proteomes" id="UP000005640">
    <property type="component" value="Chromosome 19"/>
</dbReference>
<dbReference type="RNAct" id="O75019">
    <property type="molecule type" value="protein"/>
</dbReference>
<dbReference type="Bgee" id="ENSG00000104974">
    <property type="expression patterns" value="Expressed in monocyte and 93 other cell types or tissues"/>
</dbReference>
<dbReference type="GO" id="GO:0005886">
    <property type="term" value="C:plasma membrane"/>
    <property type="evidence" value="ECO:0000318"/>
    <property type="project" value="GO_Central"/>
</dbReference>
<dbReference type="GO" id="GO:0003823">
    <property type="term" value="F:antigen binding"/>
    <property type="evidence" value="ECO:0000304"/>
    <property type="project" value="ProtInc"/>
</dbReference>
<dbReference type="GO" id="GO:0032396">
    <property type="term" value="F:inhibitory MHC class I receptor activity"/>
    <property type="evidence" value="ECO:0000318"/>
    <property type="project" value="GO_Central"/>
</dbReference>
<dbReference type="GO" id="GO:0004888">
    <property type="term" value="F:transmembrane signaling receptor activity"/>
    <property type="evidence" value="ECO:0000304"/>
    <property type="project" value="ProtInc"/>
</dbReference>
<dbReference type="GO" id="GO:0002250">
    <property type="term" value="P:adaptive immune response"/>
    <property type="evidence" value="ECO:0007669"/>
    <property type="project" value="UniProtKB-KW"/>
</dbReference>
<dbReference type="GO" id="GO:0007166">
    <property type="term" value="P:cell surface receptor signaling pathway"/>
    <property type="evidence" value="ECO:0000304"/>
    <property type="project" value="ProtInc"/>
</dbReference>
<dbReference type="GO" id="GO:0006952">
    <property type="term" value="P:defense response"/>
    <property type="evidence" value="ECO:0000304"/>
    <property type="project" value="ProtInc"/>
</dbReference>
<dbReference type="GO" id="GO:0002764">
    <property type="term" value="P:immune response-regulating signaling pathway"/>
    <property type="evidence" value="ECO:0000318"/>
    <property type="project" value="GO_Central"/>
</dbReference>
<dbReference type="GO" id="GO:0140105">
    <property type="term" value="P:interleukin-10-mediated signaling pathway"/>
    <property type="evidence" value="ECO:0000318"/>
    <property type="project" value="GO_Central"/>
</dbReference>
<dbReference type="CDD" id="cd05751">
    <property type="entry name" value="IgC2_D1_LILR_KIR_like"/>
    <property type="match status" value="1"/>
</dbReference>
<dbReference type="FunFam" id="2.60.40.10:FF:000049">
    <property type="entry name" value="Leukocyte immunoglobulin-like receptor subfamily B member 1"/>
    <property type="match status" value="4"/>
</dbReference>
<dbReference type="Gene3D" id="2.60.40.10">
    <property type="entry name" value="Immunoglobulins"/>
    <property type="match status" value="4"/>
</dbReference>
<dbReference type="InterPro" id="IPR016332">
    <property type="entry name" value="A1B_glyco/leuk_Ig-like_rcpt"/>
</dbReference>
<dbReference type="InterPro" id="IPR007110">
    <property type="entry name" value="Ig-like_dom"/>
</dbReference>
<dbReference type="InterPro" id="IPR036179">
    <property type="entry name" value="Ig-like_dom_sf"/>
</dbReference>
<dbReference type="InterPro" id="IPR013783">
    <property type="entry name" value="Ig-like_fold"/>
</dbReference>
<dbReference type="InterPro" id="IPR050412">
    <property type="entry name" value="Ig-like_Receptors_ImmuneReg"/>
</dbReference>
<dbReference type="InterPro" id="IPR003599">
    <property type="entry name" value="Ig_sub"/>
</dbReference>
<dbReference type="InterPro" id="IPR003598">
    <property type="entry name" value="Ig_sub2"/>
</dbReference>
<dbReference type="PANTHER" id="PTHR11738:SF165">
    <property type="entry name" value="LEUKOCYTE IMMUNOGLOBULIN-LIKE RECEPTOR SUBFAMILY A MEMBER 1-RELATED"/>
    <property type="match status" value="1"/>
</dbReference>
<dbReference type="PANTHER" id="PTHR11738">
    <property type="entry name" value="MHC CLASS I NK CELL RECEPTOR"/>
    <property type="match status" value="1"/>
</dbReference>
<dbReference type="Pfam" id="PF13895">
    <property type="entry name" value="Ig_2"/>
    <property type="match status" value="1"/>
</dbReference>
<dbReference type="Pfam" id="PF13927">
    <property type="entry name" value="Ig_3"/>
    <property type="match status" value="1"/>
</dbReference>
<dbReference type="PIRSF" id="PIRSF001979">
    <property type="entry name" value="Alpha_1B_glycoprot_prd"/>
    <property type="match status" value="1"/>
</dbReference>
<dbReference type="SMART" id="SM00409">
    <property type="entry name" value="IG"/>
    <property type="match status" value="4"/>
</dbReference>
<dbReference type="SMART" id="SM00408">
    <property type="entry name" value="IGc2"/>
    <property type="match status" value="3"/>
</dbReference>
<dbReference type="SUPFAM" id="SSF48726">
    <property type="entry name" value="Immunoglobulin"/>
    <property type="match status" value="4"/>
</dbReference>
<dbReference type="PROSITE" id="PS50835">
    <property type="entry name" value="IG_LIKE"/>
    <property type="match status" value="1"/>
</dbReference>
<reference key="1">
    <citation type="journal article" date="1997" name="J. Immunol.">
        <title>A family of human lymphoid and myeloid Ig-like receptors, some of which bind to MHC class I molecules.</title>
        <authorList>
            <person name="Borges L."/>
            <person name="Hsu M.-L."/>
            <person name="Fanger N."/>
            <person name="Kubin M."/>
            <person name="Cosman D."/>
        </authorList>
    </citation>
    <scope>NUCLEOTIDE SEQUENCE [MRNA] (ISOFORMS 1 AND 2)</scope>
    <scope>TISSUE SPECIFICITY</scope>
    <scope>VARIANTS GLY-12 AND PRO-220</scope>
    <source>
        <tissue>Peripheral blood leukocyte</tissue>
    </source>
</reference>
<reference key="2">
    <citation type="journal article" date="2004" name="Genome Res.">
        <title>The status, quality, and expansion of the NIH full-length cDNA project: the Mammalian Gene Collection (MGC).</title>
        <authorList>
            <consortium name="The MGC Project Team"/>
        </authorList>
    </citation>
    <scope>NUCLEOTIDE SEQUENCE [LARGE SCALE MRNA] (ISOFORM 1)</scope>
    <source>
        <tissue>Brain</tissue>
    </source>
</reference>